<organism>
    <name type="scientific">Clostridium beijerinckii (strain ATCC 51743 / NCIMB 8052)</name>
    <name type="common">Clostridium acetobutylicum</name>
    <dbReference type="NCBI Taxonomy" id="290402"/>
    <lineage>
        <taxon>Bacteria</taxon>
        <taxon>Bacillati</taxon>
        <taxon>Bacillota</taxon>
        <taxon>Clostridia</taxon>
        <taxon>Eubacteriales</taxon>
        <taxon>Clostridiaceae</taxon>
        <taxon>Clostridium</taxon>
    </lineage>
</organism>
<protein>
    <recommendedName>
        <fullName evidence="1">Probable 2-phosphosulfolactate phosphatase</fullName>
        <ecNumber evidence="1">3.1.3.71</ecNumber>
    </recommendedName>
</protein>
<keyword id="KW-0378">Hydrolase</keyword>
<keyword id="KW-0460">Magnesium</keyword>
<evidence type="ECO:0000255" key="1">
    <source>
        <dbReference type="HAMAP-Rule" id="MF_00490"/>
    </source>
</evidence>
<reference key="1">
    <citation type="submission" date="2007-06" db="EMBL/GenBank/DDBJ databases">
        <title>Complete sequence of Clostridium beijerinckii NCIMB 8052.</title>
        <authorList>
            <consortium name="US DOE Joint Genome Institute"/>
            <person name="Copeland A."/>
            <person name="Lucas S."/>
            <person name="Lapidus A."/>
            <person name="Barry K."/>
            <person name="Detter J.C."/>
            <person name="Glavina del Rio T."/>
            <person name="Hammon N."/>
            <person name="Israni S."/>
            <person name="Dalin E."/>
            <person name="Tice H."/>
            <person name="Pitluck S."/>
            <person name="Sims D."/>
            <person name="Brettin T."/>
            <person name="Bruce D."/>
            <person name="Tapia R."/>
            <person name="Brainard J."/>
            <person name="Schmutz J."/>
            <person name="Larimer F."/>
            <person name="Land M."/>
            <person name="Hauser L."/>
            <person name="Kyrpides N."/>
            <person name="Mikhailova N."/>
            <person name="Bennet G."/>
            <person name="Cann I."/>
            <person name="Chen J.-S."/>
            <person name="Contreras A.L."/>
            <person name="Jones D."/>
            <person name="Kashket E."/>
            <person name="Mitchell W."/>
            <person name="Stoddard S."/>
            <person name="Schwarz W."/>
            <person name="Qureshi N."/>
            <person name="Young M."/>
            <person name="Shi Z."/>
            <person name="Ezeji T."/>
            <person name="White B."/>
            <person name="Blaschek H."/>
            <person name="Richardson P."/>
        </authorList>
    </citation>
    <scope>NUCLEOTIDE SEQUENCE [LARGE SCALE GENOMIC DNA]</scope>
    <source>
        <strain>ATCC 51743 / NCIMB 8052</strain>
    </source>
</reference>
<feature type="chain" id="PRO_1000081392" description="Probable 2-phosphosulfolactate phosphatase">
    <location>
        <begin position="1"/>
        <end position="238"/>
    </location>
</feature>
<sequence length="238" mass="26690">MKIDIIISADDIVESRVRNKIAVIIDIFRATSVIITALDNGAREVIPYLTIEETLEYAKKLSRDNYILGGERKAVKIEGFDLSNSPLEYIKEKVEDKTVLMTTTNGTRALTKSMEAKRVFIGAMINGESVAKKLININDDVVIINAGTNGNFSMDDFICSGYIINRILDVNRNIELTDIAKTACMIYKENINILSYVREASHYSVMKSLGLNNDIDYCIKKSIIDIVPEYKDGKITCE</sequence>
<accession>A6LPF0</accession>
<name>COMB_CLOB8</name>
<gene>
    <name evidence="1" type="primary">comB</name>
    <name type="ordered locus">Cbei_0040</name>
</gene>
<comment type="catalytic activity">
    <reaction evidence="1">
        <text>(2R)-O-phospho-3-sulfolactate + H2O = (2R)-3-sulfolactate + phosphate</text>
        <dbReference type="Rhea" id="RHEA:23416"/>
        <dbReference type="ChEBI" id="CHEBI:15377"/>
        <dbReference type="ChEBI" id="CHEBI:15597"/>
        <dbReference type="ChEBI" id="CHEBI:43474"/>
        <dbReference type="ChEBI" id="CHEBI:58738"/>
        <dbReference type="EC" id="3.1.3.71"/>
    </reaction>
</comment>
<comment type="cofactor">
    <cofactor evidence="1">
        <name>Mg(2+)</name>
        <dbReference type="ChEBI" id="CHEBI:18420"/>
    </cofactor>
</comment>
<comment type="similarity">
    <text evidence="1">Belongs to the ComB family.</text>
</comment>
<dbReference type="EC" id="3.1.3.71" evidence="1"/>
<dbReference type="EMBL" id="CP000721">
    <property type="protein sequence ID" value="ABR32230.1"/>
    <property type="molecule type" value="Genomic_DNA"/>
</dbReference>
<dbReference type="RefSeq" id="WP_011967405.1">
    <property type="nucleotide sequence ID" value="NC_009617.1"/>
</dbReference>
<dbReference type="SMR" id="A6LPF0"/>
<dbReference type="KEGG" id="cbe:Cbei_0040"/>
<dbReference type="eggNOG" id="COG2045">
    <property type="taxonomic scope" value="Bacteria"/>
</dbReference>
<dbReference type="HOGENOM" id="CLU_070028_0_0_9"/>
<dbReference type="Proteomes" id="UP000000565">
    <property type="component" value="Chromosome"/>
</dbReference>
<dbReference type="GO" id="GO:0050532">
    <property type="term" value="F:2-phosphosulfolactate phosphatase activity"/>
    <property type="evidence" value="ECO:0007669"/>
    <property type="project" value="UniProtKB-UniRule"/>
</dbReference>
<dbReference type="GO" id="GO:0000287">
    <property type="term" value="F:magnesium ion binding"/>
    <property type="evidence" value="ECO:0007669"/>
    <property type="project" value="UniProtKB-UniRule"/>
</dbReference>
<dbReference type="GO" id="GO:0050545">
    <property type="term" value="F:sulfopyruvate decarboxylase activity"/>
    <property type="evidence" value="ECO:0007669"/>
    <property type="project" value="TreeGrafter"/>
</dbReference>
<dbReference type="FunFam" id="3.90.1560.10:FF:000001">
    <property type="entry name" value="Probable 2-phosphosulfolactate phosphatase"/>
    <property type="match status" value="1"/>
</dbReference>
<dbReference type="Gene3D" id="3.90.1560.10">
    <property type="entry name" value="ComB-like"/>
    <property type="match status" value="1"/>
</dbReference>
<dbReference type="HAMAP" id="MF_00490">
    <property type="entry name" value="ComB"/>
    <property type="match status" value="1"/>
</dbReference>
<dbReference type="InterPro" id="IPR005238">
    <property type="entry name" value="ComB-like"/>
</dbReference>
<dbReference type="InterPro" id="IPR036702">
    <property type="entry name" value="ComB-like_sf"/>
</dbReference>
<dbReference type="NCBIfam" id="NF002055">
    <property type="entry name" value="PRK00886.1-4"/>
    <property type="match status" value="1"/>
</dbReference>
<dbReference type="PANTHER" id="PTHR37311">
    <property type="entry name" value="2-PHOSPHOSULFOLACTATE PHOSPHATASE-RELATED"/>
    <property type="match status" value="1"/>
</dbReference>
<dbReference type="PANTHER" id="PTHR37311:SF1">
    <property type="entry name" value="2-PHOSPHOSULFOLACTATE PHOSPHATASE-RELATED"/>
    <property type="match status" value="1"/>
</dbReference>
<dbReference type="Pfam" id="PF04029">
    <property type="entry name" value="2-ph_phosp"/>
    <property type="match status" value="1"/>
</dbReference>
<dbReference type="SUPFAM" id="SSF142823">
    <property type="entry name" value="ComB-like"/>
    <property type="match status" value="1"/>
</dbReference>
<proteinExistence type="inferred from homology"/>